<protein>
    <recommendedName>
        <fullName evidence="1">DNA-directed RNA polymerase subunit beta</fullName>
        <shortName evidence="1">RNAP subunit beta</shortName>
        <ecNumber evidence="1">2.7.7.6</ecNumber>
    </recommendedName>
    <alternativeName>
        <fullName evidence="1">RNA polymerase subunit beta</fullName>
    </alternativeName>
    <alternativeName>
        <fullName evidence="1">Transcriptase subunit beta</fullName>
    </alternativeName>
</protein>
<reference key="1">
    <citation type="journal article" date="2009" name="J. Bacteriol.">
        <title>Role of conjugative elements in the evolution of the multidrug-resistant pandemic clone Streptococcus pneumoniae Spain23F ST81.</title>
        <authorList>
            <person name="Croucher N.J."/>
            <person name="Walker D."/>
            <person name="Romero P."/>
            <person name="Lennard N."/>
            <person name="Paterson G.K."/>
            <person name="Bason N.C."/>
            <person name="Mitchell A.M."/>
            <person name="Quail M.A."/>
            <person name="Andrew P.W."/>
            <person name="Parkhill J."/>
            <person name="Bentley S.D."/>
            <person name="Mitchell T.J."/>
        </authorList>
    </citation>
    <scope>NUCLEOTIDE SEQUENCE [LARGE SCALE GENOMIC DNA]</scope>
    <source>
        <strain>ATCC 700669 / Spain 23F-1</strain>
    </source>
</reference>
<feature type="chain" id="PRO_1000165825" description="DNA-directed RNA polymerase subunit beta">
    <location>
        <begin position="1"/>
        <end position="1203"/>
    </location>
</feature>
<feature type="region of interest" description="Disordered" evidence="2">
    <location>
        <begin position="1174"/>
        <end position="1203"/>
    </location>
</feature>
<feature type="compositionally biased region" description="Basic and acidic residues" evidence="2">
    <location>
        <begin position="1174"/>
        <end position="1195"/>
    </location>
</feature>
<organism>
    <name type="scientific">Streptococcus pneumoniae (strain ATCC 700669 / Spain 23F-1)</name>
    <dbReference type="NCBI Taxonomy" id="561276"/>
    <lineage>
        <taxon>Bacteria</taxon>
        <taxon>Bacillati</taxon>
        <taxon>Bacillota</taxon>
        <taxon>Bacilli</taxon>
        <taxon>Lactobacillales</taxon>
        <taxon>Streptococcaceae</taxon>
        <taxon>Streptococcus</taxon>
    </lineage>
</organism>
<keyword id="KW-0240">DNA-directed RNA polymerase</keyword>
<keyword id="KW-0548">Nucleotidyltransferase</keyword>
<keyword id="KW-0804">Transcription</keyword>
<keyword id="KW-0808">Transferase</keyword>
<gene>
    <name evidence="1" type="primary">rpoB</name>
    <name type="ordered locus">SPN23F19820</name>
</gene>
<accession>B8ZNW7</accession>
<dbReference type="EC" id="2.7.7.6" evidence="1"/>
<dbReference type="EMBL" id="FM211187">
    <property type="protein sequence ID" value="CAR69733.1"/>
    <property type="molecule type" value="Genomic_DNA"/>
</dbReference>
<dbReference type="RefSeq" id="WP_000907135.1">
    <property type="nucleotide sequence ID" value="NC_011900.1"/>
</dbReference>
<dbReference type="SMR" id="B8ZNW7"/>
<dbReference type="KEGG" id="sne:SPN23F19820"/>
<dbReference type="HOGENOM" id="CLU_000524_4_1_9"/>
<dbReference type="GO" id="GO:0000428">
    <property type="term" value="C:DNA-directed RNA polymerase complex"/>
    <property type="evidence" value="ECO:0007669"/>
    <property type="project" value="UniProtKB-KW"/>
</dbReference>
<dbReference type="GO" id="GO:0003677">
    <property type="term" value="F:DNA binding"/>
    <property type="evidence" value="ECO:0007669"/>
    <property type="project" value="UniProtKB-UniRule"/>
</dbReference>
<dbReference type="GO" id="GO:0003899">
    <property type="term" value="F:DNA-directed RNA polymerase activity"/>
    <property type="evidence" value="ECO:0007669"/>
    <property type="project" value="UniProtKB-UniRule"/>
</dbReference>
<dbReference type="GO" id="GO:0032549">
    <property type="term" value="F:ribonucleoside binding"/>
    <property type="evidence" value="ECO:0007669"/>
    <property type="project" value="InterPro"/>
</dbReference>
<dbReference type="GO" id="GO:0006351">
    <property type="term" value="P:DNA-templated transcription"/>
    <property type="evidence" value="ECO:0007669"/>
    <property type="project" value="UniProtKB-UniRule"/>
</dbReference>
<dbReference type="CDD" id="cd00653">
    <property type="entry name" value="RNA_pol_B_RPB2"/>
    <property type="match status" value="1"/>
</dbReference>
<dbReference type="Gene3D" id="2.40.50.100">
    <property type="match status" value="1"/>
</dbReference>
<dbReference type="Gene3D" id="2.40.50.150">
    <property type="match status" value="1"/>
</dbReference>
<dbReference type="Gene3D" id="3.90.1100.10">
    <property type="match status" value="2"/>
</dbReference>
<dbReference type="Gene3D" id="2.30.150.10">
    <property type="entry name" value="DNA-directed RNA polymerase, beta subunit, external 1 domain"/>
    <property type="match status" value="1"/>
</dbReference>
<dbReference type="Gene3D" id="2.40.270.10">
    <property type="entry name" value="DNA-directed RNA polymerase, subunit 2, domain 6"/>
    <property type="match status" value="1"/>
</dbReference>
<dbReference type="Gene3D" id="3.90.1800.10">
    <property type="entry name" value="RNA polymerase alpha subunit dimerisation domain"/>
    <property type="match status" value="1"/>
</dbReference>
<dbReference type="Gene3D" id="3.90.1110.10">
    <property type="entry name" value="RNA polymerase Rpb2, domain 2"/>
    <property type="match status" value="1"/>
</dbReference>
<dbReference type="HAMAP" id="MF_01321">
    <property type="entry name" value="RNApol_bact_RpoB"/>
    <property type="match status" value="1"/>
</dbReference>
<dbReference type="InterPro" id="IPR042107">
    <property type="entry name" value="DNA-dir_RNA_pol_bsu_ext_1_sf"/>
</dbReference>
<dbReference type="InterPro" id="IPR019462">
    <property type="entry name" value="DNA-dir_RNA_pol_bsu_external_1"/>
</dbReference>
<dbReference type="InterPro" id="IPR015712">
    <property type="entry name" value="DNA-dir_RNA_pol_su2"/>
</dbReference>
<dbReference type="InterPro" id="IPR007120">
    <property type="entry name" value="DNA-dir_RNAP_su2_dom"/>
</dbReference>
<dbReference type="InterPro" id="IPR037033">
    <property type="entry name" value="DNA-dir_RNAP_su2_hyb_sf"/>
</dbReference>
<dbReference type="InterPro" id="IPR010243">
    <property type="entry name" value="RNA_pol_bsu_bac"/>
</dbReference>
<dbReference type="InterPro" id="IPR007121">
    <property type="entry name" value="RNA_pol_bsu_CS"/>
</dbReference>
<dbReference type="InterPro" id="IPR007644">
    <property type="entry name" value="RNA_pol_bsu_protrusion"/>
</dbReference>
<dbReference type="InterPro" id="IPR007642">
    <property type="entry name" value="RNA_pol_Rpb2_2"/>
</dbReference>
<dbReference type="InterPro" id="IPR037034">
    <property type="entry name" value="RNA_pol_Rpb2_2_sf"/>
</dbReference>
<dbReference type="InterPro" id="IPR007645">
    <property type="entry name" value="RNA_pol_Rpb2_3"/>
</dbReference>
<dbReference type="InterPro" id="IPR007641">
    <property type="entry name" value="RNA_pol_Rpb2_7"/>
</dbReference>
<dbReference type="InterPro" id="IPR014724">
    <property type="entry name" value="RNA_pol_RPB2_OB-fold"/>
</dbReference>
<dbReference type="NCBIfam" id="NF001616">
    <property type="entry name" value="PRK00405.1"/>
    <property type="match status" value="1"/>
</dbReference>
<dbReference type="NCBIfam" id="TIGR02013">
    <property type="entry name" value="rpoB"/>
    <property type="match status" value="1"/>
</dbReference>
<dbReference type="PANTHER" id="PTHR20856">
    <property type="entry name" value="DNA-DIRECTED RNA POLYMERASE I SUBUNIT 2"/>
    <property type="match status" value="1"/>
</dbReference>
<dbReference type="Pfam" id="PF04563">
    <property type="entry name" value="RNA_pol_Rpb2_1"/>
    <property type="match status" value="1"/>
</dbReference>
<dbReference type="Pfam" id="PF04561">
    <property type="entry name" value="RNA_pol_Rpb2_2"/>
    <property type="match status" value="2"/>
</dbReference>
<dbReference type="Pfam" id="PF04565">
    <property type="entry name" value="RNA_pol_Rpb2_3"/>
    <property type="match status" value="1"/>
</dbReference>
<dbReference type="Pfam" id="PF10385">
    <property type="entry name" value="RNA_pol_Rpb2_45"/>
    <property type="match status" value="1"/>
</dbReference>
<dbReference type="Pfam" id="PF00562">
    <property type="entry name" value="RNA_pol_Rpb2_6"/>
    <property type="match status" value="1"/>
</dbReference>
<dbReference type="Pfam" id="PF04560">
    <property type="entry name" value="RNA_pol_Rpb2_7"/>
    <property type="match status" value="1"/>
</dbReference>
<dbReference type="SUPFAM" id="SSF64484">
    <property type="entry name" value="beta and beta-prime subunits of DNA dependent RNA-polymerase"/>
    <property type="match status" value="1"/>
</dbReference>
<dbReference type="PROSITE" id="PS01166">
    <property type="entry name" value="RNA_POL_BETA"/>
    <property type="match status" value="1"/>
</dbReference>
<sequence length="1203" mass="134332">MAGHDVQYGKHRTRRSFSRIKEVLDLPNLIEIQTDSFKAFLDHGLKEVFEDVLPISNFTDTMELEFVGYEIKEPKYTLEEARIHDASYSAPIFVTFRLINKETGEIKTQEVFFGDFPIMTEMGTFIINGGERIIVSQLVRSPGVYFNDKVDKNGKVGYGSTVIPNRGAWLELESDSKDITYTRIDRTRKIPFTTLVRALGFSGDDEIFDIFGDSELVRNTVEKDIHKNPMDSRTDEALKEIYERLRPGEPKTAESSRSLLVARFFDPRRYDLAAVGRYKINKKLNVKTRLLNQTIAEPLVDPETGEILVEAGTIMTRSVIESIESHLDGDLNKIVYIPNDAAVVTEPVVLQKFKVIAPTDPDRVVTIIGNANPDDKVRTVTPADILAEMSYFLNLAEGLGRVDDIDHLGNRRIRAVGELLANQVRLGLSRMERNVRERMSVQDNEVLTPQQIINIRPVTAAVKEFFGSSQLSQFMDQHNPLSELSHKRRLSALGPGGLTRDRAGYEVRDVHYTHYGRMCPIETPEGPNIGLINNLSSYGHLNKYGFVQTPYRKVDRETGVVTNEIVWLTADEEDEYTVAQANSRLNEDGTFAEKIVMGRHQGVNQEYPANIVDYMDVSPKQVVAVATACIPFLENDDSNRALMGANMQRQAVPLINPQAPYVGTGMEYQAAHDSGAAVIAQYDGKVTYADADKVEVRREDGSLDVYHIQKFRRSNSGTAYNQRTLVKVGDVVEKGDFIADGPSMENGEMALGQNPIVAYMTWEGYNFEDAVIMSERLVKDDVYTSVHLEEYESETRDTKLGPEEITREIPNVGEDALKDLDEMGIIRIGAEVKEGDILVGKVTPKGEKDLSAEERLLHAIFGDKSREVRDTSLRVPHGADGVVRDVKIFTRVNGDELQSGVNMLVRVYIAQKRKIKVGDKMAGRHGNKGVVSRIVPVEDMPYLPDGTPVDIMLNPLGVPSRMNIGQVMELHLGMAARTLGIHIATPVFDGASSEDLWSTVKEAGMDSDAKTILYDGRTGEPFDNRVSVGVMYMIKLHHMVDDKLHARSVGPYSTVTQQPLGGKAQFGGQRFGEMEVWALEAYGASNVLQEILTYKSDDINGRLKAYEAITKGKPIPKPGVPESFRVLVKELQSLGLDMRVLDEDDQEVELRDLDEGMDEDVIHVDDLEKAREKAAQEAKAAFEAEEAEKATKAEATEEAAEQE</sequence>
<evidence type="ECO:0000255" key="1">
    <source>
        <dbReference type="HAMAP-Rule" id="MF_01321"/>
    </source>
</evidence>
<evidence type="ECO:0000256" key="2">
    <source>
        <dbReference type="SAM" id="MobiDB-lite"/>
    </source>
</evidence>
<proteinExistence type="inferred from homology"/>
<name>RPOB_STRPJ</name>
<comment type="function">
    <text evidence="1">DNA-dependent RNA polymerase catalyzes the transcription of DNA into RNA using the four ribonucleoside triphosphates as substrates.</text>
</comment>
<comment type="catalytic activity">
    <reaction evidence="1">
        <text>RNA(n) + a ribonucleoside 5'-triphosphate = RNA(n+1) + diphosphate</text>
        <dbReference type="Rhea" id="RHEA:21248"/>
        <dbReference type="Rhea" id="RHEA-COMP:14527"/>
        <dbReference type="Rhea" id="RHEA-COMP:17342"/>
        <dbReference type="ChEBI" id="CHEBI:33019"/>
        <dbReference type="ChEBI" id="CHEBI:61557"/>
        <dbReference type="ChEBI" id="CHEBI:140395"/>
        <dbReference type="EC" id="2.7.7.6"/>
    </reaction>
</comment>
<comment type="subunit">
    <text evidence="1">The RNAP catalytic core consists of 2 alpha, 1 beta, 1 beta' and 1 omega subunit. When a sigma factor is associated with the core the holoenzyme is formed, which can initiate transcription.</text>
</comment>
<comment type="similarity">
    <text evidence="1">Belongs to the RNA polymerase beta chain family.</text>
</comment>